<sequence length="819" mass="92337">MTKPEIREPRAERYNPHAIEPKWQARWEQEGLYTFHEDPSKTKHYALTMFPYPSGNLHIGHWYANVAPDAHARWMRMRGYNVFFPMGFDAFGLPAENAAIKHGLNPATWTSSNIEHMLGQFKRMGTMIDWSRSLATCDPEYYRWNQWFFTEFFRRGLAYKKDGLVNWCPKDQTVLANEQVVDGRCERCGTPVERRNLSQWYLKITDYAEELLDFRDTDMPERVRAMQTNWIGKSVGAEITFDTPAGPETVFTTRPDTLMGATFLVLAPEHPKVPALTTPEQAEAVRAYVEAAGRKTDVERQQELGEKTGVFTGSYATHPVTGHQIPIWVADYVLMTYGTGSIMAVPAHDERDFDFARKFGLEIREVIRPEGGEPLDTTQAPYVGEGVIVNSGEFDGLPGGKASIAPIIARLEALGVAKPKTTYRLRDWLVSRQRYWGTPIPIVYCPDHGAQPVPADQLPVKLPENVEFMPTGQSPLKLDREWMRATCPVCGGPAERDTDTMDTFVDSSWYMYRYLSPHDDQHPFDPAHANLLPVDLYTGGIEHAILHLLYSRFWTKVMRDMGLTVQNEPFARLRNQGIILGEDGEKMSKSRGNVVDPDDLVREYGADTVRTYLMFIAPWELGGPWDPSGINGPAKWLSRVWALYFDEKAAGPEEKIGEADLRYAVHSTLKKVGADYERMSFNTIIAALMELTNTLVKAKRSPVFGTPAWEEALDIFNRMLAPVAPHIAEEIWRERGGTESVHLQAWPAVDEAAATRDTVTIGVQVSGKIRGEVQISKTATAEEALAAARAHPDVAKFTEGKQTIKEIYVPGRIINIVVK</sequence>
<gene>
    <name evidence="1" type="primary">leuS</name>
    <name type="ordered locus">Dgeo_0567</name>
</gene>
<reference key="1">
    <citation type="submission" date="2006-04" db="EMBL/GenBank/DDBJ databases">
        <title>Complete sequence of chromosome of Deinococcus geothermalis DSM 11300.</title>
        <authorList>
            <person name="Copeland A."/>
            <person name="Lucas S."/>
            <person name="Lapidus A."/>
            <person name="Barry K."/>
            <person name="Detter J.C."/>
            <person name="Glavina del Rio T."/>
            <person name="Hammon N."/>
            <person name="Israni S."/>
            <person name="Dalin E."/>
            <person name="Tice H."/>
            <person name="Pitluck S."/>
            <person name="Brettin T."/>
            <person name="Bruce D."/>
            <person name="Han C."/>
            <person name="Tapia R."/>
            <person name="Saunders E."/>
            <person name="Gilna P."/>
            <person name="Schmutz J."/>
            <person name="Larimer F."/>
            <person name="Land M."/>
            <person name="Hauser L."/>
            <person name="Kyrpides N."/>
            <person name="Kim E."/>
            <person name="Daly M.J."/>
            <person name="Fredrickson J.K."/>
            <person name="Makarova K.S."/>
            <person name="Gaidamakova E.K."/>
            <person name="Zhai M."/>
            <person name="Richardson P."/>
        </authorList>
    </citation>
    <scope>NUCLEOTIDE SEQUENCE [LARGE SCALE GENOMIC DNA]</scope>
    <source>
        <strain>DSM 11300 / CIP 105573 / AG-3a</strain>
    </source>
</reference>
<protein>
    <recommendedName>
        <fullName evidence="1">Leucine--tRNA ligase</fullName>
        <ecNumber evidence="1">6.1.1.4</ecNumber>
    </recommendedName>
    <alternativeName>
        <fullName evidence="1">Leucyl-tRNA synthetase</fullName>
        <shortName evidence="1">LeuRS</shortName>
    </alternativeName>
</protein>
<organism>
    <name type="scientific">Deinococcus geothermalis (strain DSM 11300 / CIP 105573 / AG-3a)</name>
    <dbReference type="NCBI Taxonomy" id="319795"/>
    <lineage>
        <taxon>Bacteria</taxon>
        <taxon>Thermotogati</taxon>
        <taxon>Deinococcota</taxon>
        <taxon>Deinococci</taxon>
        <taxon>Deinococcales</taxon>
        <taxon>Deinococcaceae</taxon>
        <taxon>Deinococcus</taxon>
    </lineage>
</organism>
<name>SYL_DEIGD</name>
<feature type="chain" id="PRO_0000334748" description="Leucine--tRNA ligase">
    <location>
        <begin position="1"/>
        <end position="819"/>
    </location>
</feature>
<feature type="short sequence motif" description="'HIGH' region">
    <location>
        <begin position="51"/>
        <end position="61"/>
    </location>
</feature>
<feature type="short sequence motif" description="'KMSKS' region">
    <location>
        <begin position="586"/>
        <end position="590"/>
    </location>
</feature>
<feature type="binding site" evidence="1">
    <location>
        <position position="589"/>
    </location>
    <ligand>
        <name>ATP</name>
        <dbReference type="ChEBI" id="CHEBI:30616"/>
    </ligand>
</feature>
<proteinExistence type="inferred from homology"/>
<dbReference type="EC" id="6.1.1.4" evidence="1"/>
<dbReference type="EMBL" id="CP000359">
    <property type="protein sequence ID" value="ABF44869.1"/>
    <property type="molecule type" value="Genomic_DNA"/>
</dbReference>
<dbReference type="RefSeq" id="WP_011529711.1">
    <property type="nucleotide sequence ID" value="NC_008025.1"/>
</dbReference>
<dbReference type="SMR" id="Q1J0W5"/>
<dbReference type="STRING" id="319795.Dgeo_0567"/>
<dbReference type="KEGG" id="dge:Dgeo_0567"/>
<dbReference type="eggNOG" id="COG0495">
    <property type="taxonomic scope" value="Bacteria"/>
</dbReference>
<dbReference type="HOGENOM" id="CLU_004427_0_0_0"/>
<dbReference type="Proteomes" id="UP000002431">
    <property type="component" value="Chromosome"/>
</dbReference>
<dbReference type="GO" id="GO:0005829">
    <property type="term" value="C:cytosol"/>
    <property type="evidence" value="ECO:0007669"/>
    <property type="project" value="TreeGrafter"/>
</dbReference>
<dbReference type="GO" id="GO:0002161">
    <property type="term" value="F:aminoacyl-tRNA deacylase activity"/>
    <property type="evidence" value="ECO:0007669"/>
    <property type="project" value="InterPro"/>
</dbReference>
<dbReference type="GO" id="GO:0005524">
    <property type="term" value="F:ATP binding"/>
    <property type="evidence" value="ECO:0007669"/>
    <property type="project" value="UniProtKB-UniRule"/>
</dbReference>
<dbReference type="GO" id="GO:0004823">
    <property type="term" value="F:leucine-tRNA ligase activity"/>
    <property type="evidence" value="ECO:0007669"/>
    <property type="project" value="UniProtKB-UniRule"/>
</dbReference>
<dbReference type="GO" id="GO:0006429">
    <property type="term" value="P:leucyl-tRNA aminoacylation"/>
    <property type="evidence" value="ECO:0007669"/>
    <property type="project" value="UniProtKB-UniRule"/>
</dbReference>
<dbReference type="CDD" id="cd07958">
    <property type="entry name" value="Anticodon_Ia_Leu_BEm"/>
    <property type="match status" value="1"/>
</dbReference>
<dbReference type="CDD" id="cd00812">
    <property type="entry name" value="LeuRS_core"/>
    <property type="match status" value="1"/>
</dbReference>
<dbReference type="FunFam" id="1.10.730.10:FF:000002">
    <property type="entry name" value="Leucine--tRNA ligase"/>
    <property type="match status" value="1"/>
</dbReference>
<dbReference type="FunFam" id="3.40.50.620:FF:000003">
    <property type="entry name" value="Leucine--tRNA ligase"/>
    <property type="match status" value="1"/>
</dbReference>
<dbReference type="FunFam" id="3.40.50.620:FF:000056">
    <property type="entry name" value="Leucine--tRNA ligase"/>
    <property type="match status" value="1"/>
</dbReference>
<dbReference type="Gene3D" id="3.10.20.590">
    <property type="match status" value="1"/>
</dbReference>
<dbReference type="Gene3D" id="3.40.50.620">
    <property type="entry name" value="HUPs"/>
    <property type="match status" value="2"/>
</dbReference>
<dbReference type="Gene3D" id="1.10.730.10">
    <property type="entry name" value="Isoleucyl-tRNA Synthetase, Domain 1"/>
    <property type="match status" value="1"/>
</dbReference>
<dbReference type="Gene3D" id="3.90.740.10">
    <property type="entry name" value="Valyl/Leucyl/Isoleucyl-tRNA synthetase, editing domain"/>
    <property type="match status" value="1"/>
</dbReference>
<dbReference type="HAMAP" id="MF_00049_B">
    <property type="entry name" value="Leu_tRNA_synth_B"/>
    <property type="match status" value="1"/>
</dbReference>
<dbReference type="InterPro" id="IPR002300">
    <property type="entry name" value="aa-tRNA-synth_Ia"/>
</dbReference>
<dbReference type="InterPro" id="IPR002302">
    <property type="entry name" value="Leu-tRNA-ligase"/>
</dbReference>
<dbReference type="InterPro" id="IPR025709">
    <property type="entry name" value="Leu_tRNA-synth_edit"/>
</dbReference>
<dbReference type="InterPro" id="IPR013155">
    <property type="entry name" value="M/V/L/I-tRNA-synth_anticd-bd"/>
</dbReference>
<dbReference type="InterPro" id="IPR014729">
    <property type="entry name" value="Rossmann-like_a/b/a_fold"/>
</dbReference>
<dbReference type="InterPro" id="IPR009080">
    <property type="entry name" value="tRNAsynth_Ia_anticodon-bd"/>
</dbReference>
<dbReference type="InterPro" id="IPR009008">
    <property type="entry name" value="Val/Leu/Ile-tRNA-synth_edit"/>
</dbReference>
<dbReference type="NCBIfam" id="TIGR00396">
    <property type="entry name" value="leuS_bact"/>
    <property type="match status" value="1"/>
</dbReference>
<dbReference type="PANTHER" id="PTHR43740:SF2">
    <property type="entry name" value="LEUCINE--TRNA LIGASE, MITOCHONDRIAL"/>
    <property type="match status" value="1"/>
</dbReference>
<dbReference type="PANTHER" id="PTHR43740">
    <property type="entry name" value="LEUCYL-TRNA SYNTHETASE"/>
    <property type="match status" value="1"/>
</dbReference>
<dbReference type="Pfam" id="PF08264">
    <property type="entry name" value="Anticodon_1"/>
    <property type="match status" value="1"/>
</dbReference>
<dbReference type="Pfam" id="PF00133">
    <property type="entry name" value="tRNA-synt_1"/>
    <property type="match status" value="2"/>
</dbReference>
<dbReference type="Pfam" id="PF13603">
    <property type="entry name" value="tRNA-synt_1_2"/>
    <property type="match status" value="1"/>
</dbReference>
<dbReference type="PRINTS" id="PR00985">
    <property type="entry name" value="TRNASYNTHLEU"/>
</dbReference>
<dbReference type="SUPFAM" id="SSF47323">
    <property type="entry name" value="Anticodon-binding domain of a subclass of class I aminoacyl-tRNA synthetases"/>
    <property type="match status" value="1"/>
</dbReference>
<dbReference type="SUPFAM" id="SSF52374">
    <property type="entry name" value="Nucleotidylyl transferase"/>
    <property type="match status" value="1"/>
</dbReference>
<dbReference type="SUPFAM" id="SSF50677">
    <property type="entry name" value="ValRS/IleRS/LeuRS editing domain"/>
    <property type="match status" value="1"/>
</dbReference>
<accession>Q1J0W5</accession>
<keyword id="KW-0030">Aminoacyl-tRNA synthetase</keyword>
<keyword id="KW-0067">ATP-binding</keyword>
<keyword id="KW-0963">Cytoplasm</keyword>
<keyword id="KW-0436">Ligase</keyword>
<keyword id="KW-0547">Nucleotide-binding</keyword>
<keyword id="KW-0648">Protein biosynthesis</keyword>
<comment type="catalytic activity">
    <reaction evidence="1">
        <text>tRNA(Leu) + L-leucine + ATP = L-leucyl-tRNA(Leu) + AMP + diphosphate</text>
        <dbReference type="Rhea" id="RHEA:11688"/>
        <dbReference type="Rhea" id="RHEA-COMP:9613"/>
        <dbReference type="Rhea" id="RHEA-COMP:9622"/>
        <dbReference type="ChEBI" id="CHEBI:30616"/>
        <dbReference type="ChEBI" id="CHEBI:33019"/>
        <dbReference type="ChEBI" id="CHEBI:57427"/>
        <dbReference type="ChEBI" id="CHEBI:78442"/>
        <dbReference type="ChEBI" id="CHEBI:78494"/>
        <dbReference type="ChEBI" id="CHEBI:456215"/>
        <dbReference type="EC" id="6.1.1.4"/>
    </reaction>
</comment>
<comment type="subcellular location">
    <subcellularLocation>
        <location evidence="1">Cytoplasm</location>
    </subcellularLocation>
</comment>
<comment type="similarity">
    <text evidence="1">Belongs to the class-I aminoacyl-tRNA synthetase family.</text>
</comment>
<evidence type="ECO:0000255" key="1">
    <source>
        <dbReference type="HAMAP-Rule" id="MF_00049"/>
    </source>
</evidence>